<feature type="chain" id="PRO_0000348592" description="Cytosolic arginine sensor for mTORC1 subunit 1">
    <location>
        <begin position="1"/>
        <end position="329"/>
    </location>
</feature>
<feature type="domain" description="ACT 1">
    <location>
        <begin position="72"/>
        <end position="138"/>
    </location>
</feature>
<feature type="domain" description="ACT 2">
    <location>
        <begin position="260"/>
        <end position="321"/>
    </location>
</feature>
<feature type="binding site" evidence="1">
    <location>
        <begin position="111"/>
        <end position="112"/>
    </location>
    <ligand>
        <name>L-arginine</name>
        <dbReference type="ChEBI" id="CHEBI:32682"/>
    </ligand>
</feature>
<feature type="binding site" evidence="1">
    <location>
        <position position="274"/>
    </location>
    <ligand>
        <name>L-arginine</name>
        <dbReference type="ChEBI" id="CHEBI:32682"/>
    </ligand>
</feature>
<feature type="binding site" evidence="1">
    <location>
        <begin position="280"/>
        <end position="281"/>
    </location>
    <ligand>
        <name>L-arginine</name>
        <dbReference type="ChEBI" id="CHEBI:32682"/>
    </ligand>
</feature>
<feature type="binding site" evidence="1">
    <location>
        <begin position="300"/>
        <end position="304"/>
    </location>
    <ligand>
        <name>L-arginine</name>
        <dbReference type="ChEBI" id="CHEBI:32682"/>
    </ligand>
</feature>
<feature type="modified residue" description="Phosphoserine" evidence="1">
    <location>
        <position position="14"/>
    </location>
</feature>
<name>CAST1_PONAB</name>
<proteinExistence type="evidence at transcript level"/>
<organism>
    <name type="scientific">Pongo abelii</name>
    <name type="common">Sumatran orangutan</name>
    <name type="synonym">Pongo pygmaeus abelii</name>
    <dbReference type="NCBI Taxonomy" id="9601"/>
    <lineage>
        <taxon>Eukaryota</taxon>
        <taxon>Metazoa</taxon>
        <taxon>Chordata</taxon>
        <taxon>Craniata</taxon>
        <taxon>Vertebrata</taxon>
        <taxon>Euteleostomi</taxon>
        <taxon>Mammalia</taxon>
        <taxon>Eutheria</taxon>
        <taxon>Euarchontoglires</taxon>
        <taxon>Primates</taxon>
        <taxon>Haplorrhini</taxon>
        <taxon>Catarrhini</taxon>
        <taxon>Hominidae</taxon>
        <taxon>Pongo</taxon>
    </lineage>
</organism>
<protein>
    <recommendedName>
        <fullName evidence="1">Cytosolic arginine sensor for mTORC1 subunit 1</fullName>
    </recommendedName>
    <alternativeName>
        <fullName evidence="2">GATS-like protein 3</fullName>
    </alternativeName>
</protein>
<comment type="function">
    <text evidence="1">Functions as an intracellular arginine sensor within the amino acid-sensing branch of the TORC1 signaling pathway. As a homodimer or a heterodimer with CASTOR2, binds and inhibits the GATOR subcomplex GATOR2 and thereby mTORC1. Binding of arginine to CASTOR1 allosterically disrupts the interaction of CASTOR1-containing dimers with GATOR2 which can in turn activate mTORC1 and the TORC1 signaling pathway.</text>
</comment>
<comment type="subunit">
    <text evidence="1">Forms homodimers and heterodimers with CASTOR2 (By similarity). Interacts with the GATOR2 complex which is composed of MIOS, SEC13, SEH1L, WDR24 and WDR59; the interaction is negatively regulated by arginine (By similarity). Interacts with TM4SF5; the interaction is positively regulated by leucine and is negatively regulated by arginine (By similarity).</text>
</comment>
<comment type="subcellular location">
    <subcellularLocation>
        <location evidence="1">Cytoplasm</location>
        <location evidence="1">Cytosol</location>
    </subcellularLocation>
</comment>
<comment type="domain">
    <text evidence="1">Based on x-ray crystallography data, the protein would be constituted of 4 tandem ACT domains instead of the 2 predicted from the sequence.</text>
</comment>
<comment type="PTM">
    <text evidence="1">Phosphorylation at Ser-14 by AKT1, promoting the interaction between CASTOR1 and RNF167.</text>
</comment>
<comment type="PTM">
    <text evidence="1">Ubiquitinated by RNF167 via 'Lys-29'-polyubiquitination, leading to its degradation, releasing the GATOR2 complex. Ubiquitination by RNF167 is promoted by phosphorylation at Ser-14 by AKT1.</text>
</comment>
<comment type="similarity">
    <text evidence="2">Belongs to the GATS family.</text>
</comment>
<sequence length="329" mass="36405">MELHILEHRVRVLSVARPGLWLYTHPLIKLLFLPRRSRCKFFSLTETPEDYTLMVDEEGFKELPPSEFLQVAEATWLVLNVSSHSGAAVQAAGVTKIARSVIAPLAEHHVSVLMLSTYQTDFILVREQDLSVVIHTLAQEFDIYREVGGEPVPVTRDDFSNGFPRTQHGPSPTVHPIQSPQNRFCVLTLDPETLPAIATTLIDVLFYSHRTPKEAASSSPEPSSITFFAFSLIEGYISIVMDAETQKKFPSDLLLTSSSGELWRMVRIGGQPLGFDECGIVAQIAGPLAAADISAYYISTFNFDHALVPEDGIGSVIEVLQRRQEGLAS</sequence>
<dbReference type="EMBL" id="CR859458">
    <property type="protein sequence ID" value="CAH91629.1"/>
    <property type="molecule type" value="mRNA"/>
</dbReference>
<dbReference type="RefSeq" id="NP_001125958.1">
    <property type="nucleotide sequence ID" value="NM_001132486.1"/>
</dbReference>
<dbReference type="SMR" id="Q5R9D1"/>
<dbReference type="FunCoup" id="Q5R9D1">
    <property type="interactions" value="533"/>
</dbReference>
<dbReference type="STRING" id="9601.ENSPPYP00000013058"/>
<dbReference type="GeneID" id="100172893"/>
<dbReference type="KEGG" id="pon:100172893"/>
<dbReference type="CTD" id="652968"/>
<dbReference type="eggNOG" id="ENOG502QV83">
    <property type="taxonomic scope" value="Eukaryota"/>
</dbReference>
<dbReference type="InParanoid" id="Q5R9D1"/>
<dbReference type="OrthoDB" id="58529at2759"/>
<dbReference type="Proteomes" id="UP000001595">
    <property type="component" value="Unplaced"/>
</dbReference>
<dbReference type="GO" id="GO:0005829">
    <property type="term" value="C:cytosol"/>
    <property type="evidence" value="ECO:0000250"/>
    <property type="project" value="UniProtKB"/>
</dbReference>
<dbReference type="GO" id="GO:0034618">
    <property type="term" value="F:arginine binding"/>
    <property type="evidence" value="ECO:0000250"/>
    <property type="project" value="UniProtKB"/>
</dbReference>
<dbReference type="GO" id="GO:0140311">
    <property type="term" value="F:protein sequestering activity"/>
    <property type="evidence" value="ECO:0000250"/>
    <property type="project" value="UniProtKB"/>
</dbReference>
<dbReference type="GO" id="GO:1903577">
    <property type="term" value="P:cellular response to L-arginine"/>
    <property type="evidence" value="ECO:0000250"/>
    <property type="project" value="UniProtKB"/>
</dbReference>
<dbReference type="GO" id="GO:1904262">
    <property type="term" value="P:negative regulation of TORC1 signaling"/>
    <property type="evidence" value="ECO:0000250"/>
    <property type="project" value="UniProtKB"/>
</dbReference>
<dbReference type="FunFam" id="3.30.2130.10:FF:000003">
    <property type="entry name" value="Cytosolic arginine sensor for mTORC1 subunit 1"/>
    <property type="match status" value="1"/>
</dbReference>
<dbReference type="FunFam" id="3.30.2130.10:FF:000004">
    <property type="entry name" value="Cytosolic arginine sensor for mTORC1 subunit 1"/>
    <property type="match status" value="1"/>
</dbReference>
<dbReference type="Gene3D" id="3.30.2130.10">
    <property type="entry name" value="VC0802-like"/>
    <property type="match status" value="2"/>
</dbReference>
<dbReference type="InterPro" id="IPR045865">
    <property type="entry name" value="ACT-like_dom_sf"/>
</dbReference>
<dbReference type="InterPro" id="IPR049479">
    <property type="entry name" value="CASTOR1_ACT-like"/>
</dbReference>
<dbReference type="InterPro" id="IPR040778">
    <property type="entry name" value="CASTOR1_N"/>
</dbReference>
<dbReference type="InterPro" id="IPR027795">
    <property type="entry name" value="CASTOR_ACT_dom"/>
</dbReference>
<dbReference type="InterPro" id="IPR026249">
    <property type="entry name" value="CASTOR_fam"/>
</dbReference>
<dbReference type="InterPro" id="IPR051719">
    <property type="entry name" value="CASTOR_mTORC1"/>
</dbReference>
<dbReference type="PANTHER" id="PTHR31131">
    <property type="entry name" value="CHROMOSOME 1, WHOLE GENOME SHOTGUN SEQUENCE"/>
    <property type="match status" value="1"/>
</dbReference>
<dbReference type="PANTHER" id="PTHR31131:SF3">
    <property type="entry name" value="CYTOSOLIC ARGININE SENSOR FOR MTORC1 SUBUNIT 1"/>
    <property type="match status" value="1"/>
</dbReference>
<dbReference type="Pfam" id="PF13840">
    <property type="entry name" value="ACT_7"/>
    <property type="match status" value="2"/>
</dbReference>
<dbReference type="Pfam" id="PF21389">
    <property type="entry name" value="CASTOR1_ACT-like"/>
    <property type="match status" value="1"/>
</dbReference>
<dbReference type="Pfam" id="PF18700">
    <property type="entry name" value="Castor1_N"/>
    <property type="match status" value="1"/>
</dbReference>
<dbReference type="PRINTS" id="PR02078">
    <property type="entry name" value="GATSLIKEFMLY"/>
</dbReference>
<dbReference type="SUPFAM" id="SSF55021">
    <property type="entry name" value="ACT-like"/>
    <property type="match status" value="2"/>
</dbReference>
<reference key="1">
    <citation type="submission" date="2004-11" db="EMBL/GenBank/DDBJ databases">
        <authorList>
            <consortium name="The German cDNA consortium"/>
        </authorList>
    </citation>
    <scope>NUCLEOTIDE SEQUENCE [LARGE SCALE MRNA]</scope>
    <source>
        <tissue>Heart</tissue>
    </source>
</reference>
<accession>Q5R9D1</accession>
<keyword id="KW-0963">Cytoplasm</keyword>
<keyword id="KW-0597">Phosphoprotein</keyword>
<keyword id="KW-1185">Reference proteome</keyword>
<keyword id="KW-0832">Ubl conjugation</keyword>
<evidence type="ECO:0000250" key="1">
    <source>
        <dbReference type="UniProtKB" id="Q8WTX7"/>
    </source>
</evidence>
<evidence type="ECO:0000305" key="2"/>
<gene>
    <name evidence="1" type="primary">CASTOR1</name>
    <name evidence="1" type="synonym">GATSL3</name>
</gene>